<proteinExistence type="inferred from homology"/>
<accession>A5GIT2</accession>
<comment type="function">
    <text evidence="1">One of the primary rRNA binding proteins, it binds directly to 16S rRNA central domain where it helps coordinate assembly of the platform of the 30S subunit.</text>
</comment>
<comment type="subunit">
    <text evidence="1">Part of the 30S ribosomal subunit. Contacts proteins S5 and S12.</text>
</comment>
<comment type="similarity">
    <text evidence="1">Belongs to the universal ribosomal protein uS8 family.</text>
</comment>
<evidence type="ECO:0000255" key="1">
    <source>
        <dbReference type="HAMAP-Rule" id="MF_01302"/>
    </source>
</evidence>
<evidence type="ECO:0000305" key="2"/>
<reference key="1">
    <citation type="submission" date="2006-05" db="EMBL/GenBank/DDBJ databases">
        <authorList>
            <consortium name="Genoscope"/>
        </authorList>
    </citation>
    <scope>NUCLEOTIDE SEQUENCE [LARGE SCALE GENOMIC DNA]</scope>
    <source>
        <strain>WH7803</strain>
    </source>
</reference>
<dbReference type="EMBL" id="CT971583">
    <property type="protein sequence ID" value="CAK22847.1"/>
    <property type="molecule type" value="Genomic_DNA"/>
</dbReference>
<dbReference type="SMR" id="A5GIT2"/>
<dbReference type="STRING" id="32051.SynWH7803_0421"/>
<dbReference type="KEGG" id="syx:SynWH7803_0421"/>
<dbReference type="eggNOG" id="COG0096">
    <property type="taxonomic scope" value="Bacteria"/>
</dbReference>
<dbReference type="HOGENOM" id="CLU_098428_0_2_3"/>
<dbReference type="OrthoDB" id="9802617at2"/>
<dbReference type="Proteomes" id="UP000001566">
    <property type="component" value="Chromosome"/>
</dbReference>
<dbReference type="GO" id="GO:1990904">
    <property type="term" value="C:ribonucleoprotein complex"/>
    <property type="evidence" value="ECO:0007669"/>
    <property type="project" value="UniProtKB-KW"/>
</dbReference>
<dbReference type="GO" id="GO:0005840">
    <property type="term" value="C:ribosome"/>
    <property type="evidence" value="ECO:0007669"/>
    <property type="project" value="UniProtKB-KW"/>
</dbReference>
<dbReference type="GO" id="GO:0019843">
    <property type="term" value="F:rRNA binding"/>
    <property type="evidence" value="ECO:0007669"/>
    <property type="project" value="UniProtKB-UniRule"/>
</dbReference>
<dbReference type="GO" id="GO:0003735">
    <property type="term" value="F:structural constituent of ribosome"/>
    <property type="evidence" value="ECO:0007669"/>
    <property type="project" value="InterPro"/>
</dbReference>
<dbReference type="GO" id="GO:0006412">
    <property type="term" value="P:translation"/>
    <property type="evidence" value="ECO:0007669"/>
    <property type="project" value="UniProtKB-UniRule"/>
</dbReference>
<dbReference type="FunFam" id="3.30.1370.30:FF:000002">
    <property type="entry name" value="30S ribosomal protein S8"/>
    <property type="match status" value="1"/>
</dbReference>
<dbReference type="FunFam" id="3.30.1490.10:FF:000001">
    <property type="entry name" value="30S ribosomal protein S8"/>
    <property type="match status" value="1"/>
</dbReference>
<dbReference type="Gene3D" id="3.30.1370.30">
    <property type="match status" value="1"/>
</dbReference>
<dbReference type="Gene3D" id="3.30.1490.10">
    <property type="match status" value="1"/>
</dbReference>
<dbReference type="HAMAP" id="MF_01302_B">
    <property type="entry name" value="Ribosomal_uS8_B"/>
    <property type="match status" value="1"/>
</dbReference>
<dbReference type="InterPro" id="IPR000630">
    <property type="entry name" value="Ribosomal_uS8"/>
</dbReference>
<dbReference type="InterPro" id="IPR047863">
    <property type="entry name" value="Ribosomal_uS8_CS"/>
</dbReference>
<dbReference type="InterPro" id="IPR035987">
    <property type="entry name" value="Ribosomal_uS8_sf"/>
</dbReference>
<dbReference type="NCBIfam" id="NF001109">
    <property type="entry name" value="PRK00136.1"/>
    <property type="match status" value="1"/>
</dbReference>
<dbReference type="PANTHER" id="PTHR11758">
    <property type="entry name" value="40S RIBOSOMAL PROTEIN S15A"/>
    <property type="match status" value="1"/>
</dbReference>
<dbReference type="Pfam" id="PF00410">
    <property type="entry name" value="Ribosomal_S8"/>
    <property type="match status" value="1"/>
</dbReference>
<dbReference type="SUPFAM" id="SSF56047">
    <property type="entry name" value="Ribosomal protein S8"/>
    <property type="match status" value="1"/>
</dbReference>
<dbReference type="PROSITE" id="PS00053">
    <property type="entry name" value="RIBOSOMAL_S8"/>
    <property type="match status" value="1"/>
</dbReference>
<name>RS8_SYNPW</name>
<gene>
    <name evidence="1" type="primary">rpsH</name>
    <name evidence="1" type="synonym">rps8</name>
    <name type="ordered locus">SynWH7803_0421</name>
</gene>
<protein>
    <recommendedName>
        <fullName evidence="1">Small ribosomal subunit protein uS8</fullName>
    </recommendedName>
    <alternativeName>
        <fullName evidence="2">30S ribosomal protein S8</fullName>
    </alternativeName>
</protein>
<feature type="chain" id="PRO_0000305760" description="Small ribosomal subunit protein uS8">
    <location>
        <begin position="1"/>
        <end position="133"/>
    </location>
</feature>
<organism>
    <name type="scientific">Synechococcus sp. (strain WH7803)</name>
    <dbReference type="NCBI Taxonomy" id="32051"/>
    <lineage>
        <taxon>Bacteria</taxon>
        <taxon>Bacillati</taxon>
        <taxon>Cyanobacteriota</taxon>
        <taxon>Cyanophyceae</taxon>
        <taxon>Synechococcales</taxon>
        <taxon>Synechococcaceae</taxon>
        <taxon>Synechococcus</taxon>
    </lineage>
</organism>
<keyword id="KW-1185">Reference proteome</keyword>
<keyword id="KW-0687">Ribonucleoprotein</keyword>
<keyword id="KW-0689">Ribosomal protein</keyword>
<keyword id="KW-0694">RNA-binding</keyword>
<keyword id="KW-0699">rRNA-binding</keyword>
<sequence length="133" mass="14716">MANHDPISDMLTRIRNASEKRHQNTKVPASRMSRSIAKVLQQEGFIAEISEEGEGVHTNLVLELKYSGKHRLPTIRSMQRVSKPGLRIYKNTRGLPKVLGGLGVAIISTSKGVMSDRDARKQGVGGEVLCYVY</sequence>